<reference key="1">
    <citation type="journal article" date="1998" name="Science">
        <title>Genome sequence of the nematode C. elegans: a platform for investigating biology.</title>
        <authorList>
            <consortium name="The C. elegans sequencing consortium"/>
        </authorList>
    </citation>
    <scope>NUCLEOTIDE SEQUENCE [LARGE SCALE GENOMIC DNA]</scope>
    <source>
        <strain>Bristol N2</strain>
    </source>
</reference>
<name>PFKA2_CAEEL</name>
<gene>
    <name evidence="3" type="primary">pfk-1.2</name>
    <name evidence="3" type="ORF">C50F4.2</name>
</gene>
<evidence type="ECO:0000250" key="1">
    <source>
        <dbReference type="UniProtKB" id="P16861"/>
    </source>
</evidence>
<evidence type="ECO:0000305" key="2"/>
<evidence type="ECO:0000312" key="3">
    <source>
        <dbReference type="WormBase" id="C50F4.2"/>
    </source>
</evidence>
<comment type="function">
    <text evidence="1">Catalyzes the phosphorylation of D-fructose 6-phosphate to fructose 1,6-bisphosphate by ATP, the first committing step of glycolysis.</text>
</comment>
<comment type="catalytic activity">
    <reaction evidence="1">
        <text>beta-D-fructose 6-phosphate + ATP = beta-D-fructose 1,6-bisphosphate + ADP + H(+)</text>
        <dbReference type="Rhea" id="RHEA:16109"/>
        <dbReference type="ChEBI" id="CHEBI:15378"/>
        <dbReference type="ChEBI" id="CHEBI:30616"/>
        <dbReference type="ChEBI" id="CHEBI:32966"/>
        <dbReference type="ChEBI" id="CHEBI:57634"/>
        <dbReference type="ChEBI" id="CHEBI:456216"/>
        <dbReference type="EC" id="2.7.1.11"/>
    </reaction>
</comment>
<comment type="cofactor">
    <cofactor evidence="1">
        <name>Mg(2+)</name>
        <dbReference type="ChEBI" id="CHEBI:18420"/>
    </cofactor>
</comment>
<comment type="activity regulation">
    <text evidence="1">Allosterically activated by ADP, AMP, or fructose 2,6-bisphosphate, and allosterically inhibited by ATP or citrate.</text>
</comment>
<comment type="pathway">
    <text evidence="1">Carbohydrate degradation; glycolysis; D-glyceraldehyde 3-phosphate and glycerone phosphate from D-glucose: step 3/4.</text>
</comment>
<comment type="subunit">
    <text evidence="1">Homotetramer.</text>
</comment>
<comment type="subcellular location">
    <subcellularLocation>
        <location evidence="1">Cytoplasm</location>
    </subcellularLocation>
</comment>
<comment type="similarity">
    <text evidence="2">Belongs to the phosphofructokinase type A (PFKA) family. ATP-dependent PFK group I subfamily. Eukaryotic two domain clade 'E' sub-subfamily.</text>
</comment>
<sequence length="756" mass="83301">MEQKFKKGKDHGVGVLTSGGDSQGMNAAVRSVVRETIRQGHRCYLIREGYNGLINGNIELAKWAHVANVTHLGGSMIGTSRCDEFRTTDGRKKAAAIMFDKRIFHLIVIGGDGSLMGAQKLKEEWGRFGEELFAEGKITEEVANEGRELHLAGIVGSIDNDCIESDKSIGSDTALHRICEAIDGLVMTAQSHQRVFVVEVMGRHCGYLALTAAIAVEADYVFYPEIPPDEKWPEQLCHQLGSVRKMGKRQNVIILGEGVTNSKGQRIDVRQVKEEIETRLQLEVRIATLGHLQRGGAPSFLDRLIGLRMGYEAVQEVLKGKEEKEGAVVTGQKTIAKVMCLRGHNIQRNELSRVIRQTETANEEIMQRHSDLACRLRGFGFLDKQTYLNFVSIPLSTTMPSRTKTFAVVHIGSPCAGMNAATYSFTRMANHSGIQVIGIKHGWDGLKNKDVKLLTWANVQGWAQFGGSMLGTKRQLPSEMDLIAEGLNSNNVDGLVIIGGFMAFESALILQQNRSEYTCLSIPIVVIPATISNNCPGTCMSLGVDTALNEICRQVDNISQNAIGSKNKVMIIETMGSRSGFLATMTALSTGSQFALIRQVETNEKDLEKLAIETKERLDSGNLEKFLLIRSEGASDEIYSPDVKKIFDKVMKNKYGVRITNLGYSQLGGHPSCFDRQMGIRMGVRAFEGIVNPVKMGDRDCCVIGLRGSSLRYVPVQGLGKKVCFEHGVPHNMWWLDLHPLVEAMTKKPQEAVLSS</sequence>
<protein>
    <recommendedName>
        <fullName>ATP-dependent 6-phosphofructokinase 2</fullName>
        <shortName>ATP-PFK 2</shortName>
        <shortName>Phosphofructokinase 2</shortName>
        <ecNumber evidence="1">2.7.1.11</ecNumber>
    </recommendedName>
    <alternativeName>
        <fullName>Phosphohexokinase 2</fullName>
    </alternativeName>
</protein>
<feature type="chain" id="PRO_0000112029" description="ATP-dependent 6-phosphofructokinase 2">
    <location>
        <begin position="1"/>
        <end position="756"/>
    </location>
</feature>
<feature type="region of interest" description="N-terminal catalytic PFK domain 1" evidence="1">
    <location>
        <begin position="1"/>
        <end position="393"/>
    </location>
</feature>
<feature type="region of interest" description="Interdomain linker" evidence="1">
    <location>
        <begin position="394"/>
        <end position="404"/>
    </location>
</feature>
<feature type="region of interest" description="C-terminal regulatory PFK domain 2" evidence="1">
    <location>
        <begin position="405"/>
        <end position="756"/>
    </location>
</feature>
<feature type="active site" description="Proton acceptor" evidence="1">
    <location>
        <position position="159"/>
    </location>
</feature>
<feature type="binding site" evidence="1">
    <location>
        <position position="20"/>
    </location>
    <ligand>
        <name>ATP</name>
        <dbReference type="ChEBI" id="CHEBI:30616"/>
    </ligand>
</feature>
<feature type="binding site" evidence="1">
    <location>
        <begin position="81"/>
        <end position="82"/>
    </location>
    <ligand>
        <name>ATP</name>
        <dbReference type="ChEBI" id="CHEBI:30616"/>
    </ligand>
</feature>
<feature type="binding site" evidence="1">
    <location>
        <begin position="111"/>
        <end position="114"/>
    </location>
    <ligand>
        <name>ATP</name>
        <dbReference type="ChEBI" id="CHEBI:30616"/>
    </ligand>
</feature>
<feature type="binding site" evidence="1">
    <location>
        <position position="112"/>
    </location>
    <ligand>
        <name>Mg(2+)</name>
        <dbReference type="ChEBI" id="CHEBI:18420"/>
        <note>catalytic</note>
    </ligand>
</feature>
<feature type="binding site" description="in other chain" evidence="1">
    <location>
        <begin position="157"/>
        <end position="159"/>
    </location>
    <ligand>
        <name>substrate</name>
        <note>ligand shared between dimeric partners</note>
    </ligand>
</feature>
<feature type="binding site" evidence="1">
    <location>
        <position position="194"/>
    </location>
    <ligand>
        <name>substrate</name>
        <note>ligand shared between dimeric partners</note>
    </ligand>
</feature>
<feature type="binding site" description="in other chain" evidence="1">
    <location>
        <begin position="201"/>
        <end position="203"/>
    </location>
    <ligand>
        <name>substrate</name>
        <note>ligand shared between dimeric partners</note>
    </ligand>
</feature>
<feature type="binding site" description="in other chain" evidence="1">
    <location>
        <position position="257"/>
    </location>
    <ligand>
        <name>substrate</name>
        <note>ligand shared between dimeric partners</note>
    </ligand>
</feature>
<feature type="binding site" evidence="1">
    <location>
        <position position="285"/>
    </location>
    <ligand>
        <name>substrate</name>
        <note>ligand shared between dimeric partners</note>
    </ligand>
</feature>
<feature type="binding site" description="in other chain" evidence="1">
    <location>
        <begin position="291"/>
        <end position="294"/>
    </location>
    <ligand>
        <name>substrate</name>
        <note>ligand shared between dimeric partners</note>
    </ligand>
</feature>
<feature type="binding site" description="in other chain" evidence="1">
    <location>
        <position position="474"/>
    </location>
    <ligand>
        <name>beta-D-fructose 2,6-bisphosphate</name>
        <dbReference type="ChEBI" id="CHEBI:58579"/>
        <note>allosteric activator; ligand shared between dimeric partners</note>
    </ligand>
</feature>
<feature type="binding site" description="in other chain" evidence="1">
    <location>
        <begin position="530"/>
        <end position="534"/>
    </location>
    <ligand>
        <name>beta-D-fructose 2,6-bisphosphate</name>
        <dbReference type="ChEBI" id="CHEBI:58579"/>
        <note>allosteric activator; ligand shared between dimeric partners</note>
    </ligand>
</feature>
<feature type="binding site" description="in other chain" evidence="1">
    <location>
        <begin position="575"/>
        <end position="577"/>
    </location>
    <ligand>
        <name>beta-D-fructose 2,6-bisphosphate</name>
        <dbReference type="ChEBI" id="CHEBI:58579"/>
        <note>allosteric activator; ligand shared between dimeric partners</note>
    </ligand>
</feature>
<feature type="binding site" description="in other chain" evidence="1">
    <location>
        <position position="632"/>
    </location>
    <ligand>
        <name>beta-D-fructose 2,6-bisphosphate</name>
        <dbReference type="ChEBI" id="CHEBI:58579"/>
        <note>allosteric activator; ligand shared between dimeric partners</note>
    </ligand>
</feature>
<feature type="binding site" evidence="1">
    <location>
        <position position="658"/>
    </location>
    <ligand>
        <name>beta-D-fructose 2,6-bisphosphate</name>
        <dbReference type="ChEBI" id="CHEBI:58579"/>
        <note>allosteric activator; ligand shared between dimeric partners</note>
    </ligand>
</feature>
<feature type="binding site" description="in other chain" evidence="1">
    <location>
        <begin position="664"/>
        <end position="667"/>
    </location>
    <ligand>
        <name>beta-D-fructose 2,6-bisphosphate</name>
        <dbReference type="ChEBI" id="CHEBI:58579"/>
        <note>allosteric activator; ligand shared between dimeric partners</note>
    </ligand>
</feature>
<accession>Q27483</accession>
<organism>
    <name type="scientific">Caenorhabditis elegans</name>
    <dbReference type="NCBI Taxonomy" id="6239"/>
    <lineage>
        <taxon>Eukaryota</taxon>
        <taxon>Metazoa</taxon>
        <taxon>Ecdysozoa</taxon>
        <taxon>Nematoda</taxon>
        <taxon>Chromadorea</taxon>
        <taxon>Rhabditida</taxon>
        <taxon>Rhabditina</taxon>
        <taxon>Rhabditomorpha</taxon>
        <taxon>Rhabditoidea</taxon>
        <taxon>Rhabditidae</taxon>
        <taxon>Peloderinae</taxon>
        <taxon>Caenorhabditis</taxon>
    </lineage>
</organism>
<proteinExistence type="inferred from homology"/>
<dbReference type="EC" id="2.7.1.11" evidence="1"/>
<dbReference type="EMBL" id="Z70750">
    <property type="protein sequence ID" value="CAA94737.1"/>
    <property type="molecule type" value="Genomic_DNA"/>
</dbReference>
<dbReference type="PIR" id="T20109">
    <property type="entry name" value="T20109"/>
</dbReference>
<dbReference type="RefSeq" id="NP_505457.1">
    <property type="nucleotide sequence ID" value="NM_073056.4"/>
</dbReference>
<dbReference type="SMR" id="Q27483"/>
<dbReference type="FunCoup" id="Q27483">
    <property type="interactions" value="207"/>
</dbReference>
<dbReference type="STRING" id="6239.C50F4.2.1"/>
<dbReference type="PaxDb" id="6239-C50F4.2"/>
<dbReference type="PeptideAtlas" id="Q27483"/>
<dbReference type="EnsemblMetazoa" id="C50F4.2.1">
    <property type="protein sequence ID" value="C50F4.2.1"/>
    <property type="gene ID" value="WBGene00008230"/>
</dbReference>
<dbReference type="GeneID" id="179335"/>
<dbReference type="KEGG" id="cel:CELE_C50F4.2"/>
<dbReference type="UCSC" id="C50F4.2">
    <property type="organism name" value="c. elegans"/>
</dbReference>
<dbReference type="AGR" id="WB:WBGene00008230"/>
<dbReference type="CTD" id="179335"/>
<dbReference type="WormBase" id="C50F4.2">
    <property type="protein sequence ID" value="CE05467"/>
    <property type="gene ID" value="WBGene00008230"/>
    <property type="gene designation" value="pfk-1.2"/>
</dbReference>
<dbReference type="eggNOG" id="KOG2440">
    <property type="taxonomic scope" value="Eukaryota"/>
</dbReference>
<dbReference type="HOGENOM" id="CLU_011053_0_0_1"/>
<dbReference type="InParanoid" id="Q27483"/>
<dbReference type="OMA" id="RCYLIRE"/>
<dbReference type="OrthoDB" id="537915at2759"/>
<dbReference type="PhylomeDB" id="Q27483"/>
<dbReference type="Reactome" id="R-CEL-6798695">
    <property type="pathway name" value="Neutrophil degranulation"/>
</dbReference>
<dbReference type="Reactome" id="R-CEL-70171">
    <property type="pathway name" value="Glycolysis"/>
</dbReference>
<dbReference type="UniPathway" id="UPA00109">
    <property type="reaction ID" value="UER00182"/>
</dbReference>
<dbReference type="PRO" id="PR:Q27483"/>
<dbReference type="Proteomes" id="UP000001940">
    <property type="component" value="Chromosome V"/>
</dbReference>
<dbReference type="Bgee" id="WBGene00008230">
    <property type="expression patterns" value="Expressed in larva and 1 other cell type or tissue"/>
</dbReference>
<dbReference type="GO" id="GO:0005945">
    <property type="term" value="C:6-phosphofructokinase complex"/>
    <property type="evidence" value="ECO:0000318"/>
    <property type="project" value="GO_Central"/>
</dbReference>
<dbReference type="GO" id="GO:0003872">
    <property type="term" value="F:6-phosphofructokinase activity"/>
    <property type="evidence" value="ECO:0000318"/>
    <property type="project" value="GO_Central"/>
</dbReference>
<dbReference type="GO" id="GO:0005524">
    <property type="term" value="F:ATP binding"/>
    <property type="evidence" value="ECO:0007669"/>
    <property type="project" value="UniProtKB-KW"/>
</dbReference>
<dbReference type="GO" id="GO:0070095">
    <property type="term" value="F:fructose-6-phosphate binding"/>
    <property type="evidence" value="ECO:0000318"/>
    <property type="project" value="GO_Central"/>
</dbReference>
<dbReference type="GO" id="GO:0046872">
    <property type="term" value="F:metal ion binding"/>
    <property type="evidence" value="ECO:0007669"/>
    <property type="project" value="UniProtKB-KW"/>
</dbReference>
<dbReference type="GO" id="GO:0061621">
    <property type="term" value="P:canonical glycolysis"/>
    <property type="evidence" value="ECO:0000318"/>
    <property type="project" value="GO_Central"/>
</dbReference>
<dbReference type="GO" id="GO:0030388">
    <property type="term" value="P:fructose 1,6-bisphosphate metabolic process"/>
    <property type="evidence" value="ECO:0000318"/>
    <property type="project" value="GO_Central"/>
</dbReference>
<dbReference type="GO" id="GO:0006002">
    <property type="term" value="P:fructose 6-phosphate metabolic process"/>
    <property type="evidence" value="ECO:0000318"/>
    <property type="project" value="GO_Central"/>
</dbReference>
<dbReference type="FunFam" id="3.40.50.460:FF:000002">
    <property type="entry name" value="ATP-dependent 6-phosphofructokinase"/>
    <property type="match status" value="1"/>
</dbReference>
<dbReference type="Gene3D" id="3.40.50.450">
    <property type="match status" value="2"/>
</dbReference>
<dbReference type="Gene3D" id="3.40.50.460">
    <property type="entry name" value="Phosphofructokinase domain"/>
    <property type="match status" value="2"/>
</dbReference>
<dbReference type="InterPro" id="IPR009161">
    <property type="entry name" value="6-Pfructokinase_euk"/>
</dbReference>
<dbReference type="InterPro" id="IPR022953">
    <property type="entry name" value="ATP_PFK"/>
</dbReference>
<dbReference type="InterPro" id="IPR015912">
    <property type="entry name" value="Phosphofructokinase_CS"/>
</dbReference>
<dbReference type="InterPro" id="IPR000023">
    <property type="entry name" value="Phosphofructokinase_dom"/>
</dbReference>
<dbReference type="InterPro" id="IPR035966">
    <property type="entry name" value="PKF_sf"/>
</dbReference>
<dbReference type="NCBIfam" id="TIGR02478">
    <property type="entry name" value="6PF1K_euk"/>
    <property type="match status" value="1"/>
</dbReference>
<dbReference type="PANTHER" id="PTHR13697:SF8">
    <property type="entry name" value="ATP-DEPENDENT 6-PHOSPHOFRUCTOKINASE 2"/>
    <property type="match status" value="1"/>
</dbReference>
<dbReference type="PANTHER" id="PTHR13697">
    <property type="entry name" value="PHOSPHOFRUCTOKINASE"/>
    <property type="match status" value="1"/>
</dbReference>
<dbReference type="Pfam" id="PF00365">
    <property type="entry name" value="PFK"/>
    <property type="match status" value="2"/>
</dbReference>
<dbReference type="PIRSF" id="PIRSF000533">
    <property type="entry name" value="ATP_PFK_euk"/>
    <property type="match status" value="1"/>
</dbReference>
<dbReference type="PRINTS" id="PR00476">
    <property type="entry name" value="PHFRCTKINASE"/>
</dbReference>
<dbReference type="SUPFAM" id="SSF53784">
    <property type="entry name" value="Phosphofructokinase"/>
    <property type="match status" value="2"/>
</dbReference>
<dbReference type="PROSITE" id="PS00433">
    <property type="entry name" value="PHOSPHOFRUCTOKINASE"/>
    <property type="match status" value="1"/>
</dbReference>
<keyword id="KW-0021">Allosteric enzyme</keyword>
<keyword id="KW-0067">ATP-binding</keyword>
<keyword id="KW-0963">Cytoplasm</keyword>
<keyword id="KW-0324">Glycolysis</keyword>
<keyword id="KW-0418">Kinase</keyword>
<keyword id="KW-0460">Magnesium</keyword>
<keyword id="KW-0479">Metal-binding</keyword>
<keyword id="KW-0547">Nucleotide-binding</keyword>
<keyword id="KW-1185">Reference proteome</keyword>
<keyword id="KW-0808">Transferase</keyword>